<comment type="function">
    <text evidence="2">Catalyzes hyaluronan degradation into small fragments that are endocytosed and degraded in lysosomes by HYAL1 and exoglycosidases. Essential for the breakdown of extracellular matrix hyaluronan.</text>
</comment>
<comment type="catalytic activity">
    <reaction>
        <text>Random hydrolysis of (1-&gt;4)-linkages between N-acetyl-beta-D-glucosamine and D-glucuronate residues in hyaluronate.</text>
        <dbReference type="EC" id="3.2.1.35"/>
    </reaction>
</comment>
<comment type="subunit">
    <text evidence="3">Interacts with MST1R.</text>
</comment>
<comment type="subunit">
    <text evidence="5">(Microbial infection) Interacts with Jaagsiekte sheep retrovirus (JSRV) envelope proteins.</text>
</comment>
<comment type="subcellular location">
    <subcellularLocation>
        <location evidence="3">Cell membrane</location>
        <topology evidence="3">Lipid-anchor</topology>
        <topology evidence="3">GPI-anchor</topology>
    </subcellularLocation>
</comment>
<comment type="miscellaneous">
    <text evidence="5">Acts as a receptor for the Jaagsiekte sheep retrovirus (JSRV), which induces ovine pulmonary adenocarcinoma. A possible mechanism is that binding to JSRV envelope proteins may liberate the oncogenic factor MST1R that is normally negatively regulated by HYAL2, leading to oncogenic transformation.</text>
</comment>
<comment type="similarity">
    <text evidence="6">Belongs to the glycosyl hydrolase 56 family.</text>
</comment>
<organism>
    <name type="scientific">Ovis aries</name>
    <name type="common">Sheep</name>
    <dbReference type="NCBI Taxonomy" id="9940"/>
    <lineage>
        <taxon>Eukaryota</taxon>
        <taxon>Metazoa</taxon>
        <taxon>Chordata</taxon>
        <taxon>Craniata</taxon>
        <taxon>Vertebrata</taxon>
        <taxon>Euteleostomi</taxon>
        <taxon>Mammalia</taxon>
        <taxon>Eutheria</taxon>
        <taxon>Laurasiatheria</taxon>
        <taxon>Artiodactyla</taxon>
        <taxon>Ruminantia</taxon>
        <taxon>Pecora</taxon>
        <taxon>Bovidae</taxon>
        <taxon>Caprinae</taxon>
        <taxon>Ovis</taxon>
    </lineage>
</organism>
<sequence>MWTGLGPAVTLALVLVVAWATELKPTAPPIFTGRPFVVAWDVPTQDCGPRHKMPLDPKDMKAFDVQASPNEGFVNQNITIFYRDRLGMYPHFNSVGRSVHGGVPQNGSLWVHLEMLKGHVEHYIRTQEPAGLAVIDWEDWRPVWVRNWQDKDVYRRLSRQLVASHHPDWPPERIVKEAQYEFEFAARQFMLETLRFVKAFRPRHLWGFYLFPDCYNHDYVQNWETYTGRCPDVEVSRNDQLSWLWAESTALFPSVYLEETLASSTHGRNFVSFRVQEALRVADVHHANHALPVYVFTRPTYSRGLTGLSEMDLISTIGESAALGAAGVILWGDAGFTTSNETCRRLKDYLTRSLVPYVVNVSWAAQYCSWAQCHGHGRCVRRDPNAHTFLHLSASSFRLVPSHAPDEPRLRPEGELSWADRNHLQTHFRCQCYLGWGGEQCQWDRRRAAGGASGAWAGSHLTGLLAVAVLAFTWTS</sequence>
<evidence type="ECO:0000250" key="1"/>
<evidence type="ECO:0000250" key="2">
    <source>
        <dbReference type="UniProtKB" id="O35632"/>
    </source>
</evidence>
<evidence type="ECO:0000250" key="3">
    <source>
        <dbReference type="UniProtKB" id="Q12891"/>
    </source>
</evidence>
<evidence type="ECO:0000255" key="4"/>
<evidence type="ECO:0000269" key="5">
    <source>
    </source>
</evidence>
<evidence type="ECO:0000305" key="6"/>
<gene>
    <name type="primary">HYAL2</name>
</gene>
<proteinExistence type="evidence at protein level"/>
<feature type="signal peptide" evidence="4">
    <location>
        <begin position="1"/>
        <end position="20"/>
    </location>
</feature>
<feature type="chain" id="PRO_0000239065" description="Hyaluronidase-2">
    <location>
        <begin position="21"/>
        <end position="451"/>
    </location>
</feature>
<feature type="propeptide" id="PRO_0000239066" description="Removed in mature form" evidence="4">
    <location>
        <begin position="452"/>
        <end position="476"/>
    </location>
</feature>
<feature type="domain" description="EGF-like">
    <location>
        <begin position="364"/>
        <end position="442"/>
    </location>
</feature>
<feature type="active site" description="Proton donor" evidence="1">
    <location>
        <position position="138"/>
    </location>
</feature>
<feature type="lipid moiety-binding region" description="GPI-anchor amidated glycine" evidence="4">
    <location>
        <position position="451"/>
    </location>
</feature>
<feature type="glycosylation site" description="N-linked (GlcNAc...) asparagine" evidence="4">
    <location>
        <position position="77"/>
    </location>
</feature>
<feature type="glycosylation site" description="N-linked (GlcNAc...) asparagine" evidence="4">
    <location>
        <position position="106"/>
    </location>
</feature>
<feature type="glycosylation site" description="N-linked (GlcNAc...) asparagine" evidence="4">
    <location>
        <position position="340"/>
    </location>
</feature>
<feature type="glycosylation site" description="N-linked (GlcNAc...) asparagine" evidence="4">
    <location>
        <position position="360"/>
    </location>
</feature>
<feature type="disulfide bond" evidence="1">
    <location>
        <begin position="47"/>
        <end position="343"/>
    </location>
</feature>
<feature type="disulfide bond" evidence="1">
    <location>
        <begin position="214"/>
        <end position="230"/>
    </location>
</feature>
<feature type="disulfide bond" evidence="1">
    <location>
        <begin position="368"/>
        <end position="379"/>
    </location>
</feature>
<feature type="disulfide bond" evidence="1">
    <location>
        <begin position="373"/>
        <end position="430"/>
    </location>
</feature>
<feature type="disulfide bond" evidence="1">
    <location>
        <begin position="432"/>
        <end position="441"/>
    </location>
</feature>
<keyword id="KW-1003">Cell membrane</keyword>
<keyword id="KW-1015">Disulfide bond</keyword>
<keyword id="KW-0245">EGF-like domain</keyword>
<keyword id="KW-0325">Glycoprotein</keyword>
<keyword id="KW-0326">Glycosidase</keyword>
<keyword id="KW-0336">GPI-anchor</keyword>
<keyword id="KW-0945">Host-virus interaction</keyword>
<keyword id="KW-0378">Hydrolase</keyword>
<keyword id="KW-0449">Lipoprotein</keyword>
<keyword id="KW-0472">Membrane</keyword>
<keyword id="KW-0675">Receptor</keyword>
<keyword id="KW-1185">Reference proteome</keyword>
<keyword id="KW-0732">Signal</keyword>
<name>HYAL2_SHEEP</name>
<reference key="1">
    <citation type="journal article" date="2002" name="J. Virol.">
        <title>Mechanism of cell entry and transformation by enzootic nasal tumor virus.</title>
        <authorList>
            <person name="Dirks C."/>
            <person name="Duh F.-M."/>
            <person name="Rai S.K."/>
            <person name="Lerman M.I."/>
            <person name="Miller A.D."/>
        </authorList>
    </citation>
    <scope>NUCLEOTIDE SEQUENCE [MRNA]</scope>
</reference>
<reference key="2">
    <citation type="journal article" date="2001" name="Proc. Natl. Acad. Sci. U.S.A.">
        <title>Candidate tumor suppressor HYAL2 is a glycosylphosphatidylinositol (GPI)-anchored cell-surface receptor for jaagsiekte sheep retrovirus, the envelope protein of which mediates oncogenic transformation.</title>
        <authorList>
            <person name="Rai S.K."/>
            <person name="Duh F.-M."/>
            <person name="Vigdorovich V."/>
            <person name="Danilkovitch-Miagkova A."/>
            <person name="Lerman M.I."/>
            <person name="Miller A.D."/>
        </authorList>
    </citation>
    <scope>INTERACTION WITH JSRV ENVELOPE PROTEINS</scope>
</reference>
<dbReference type="EC" id="3.2.1.35"/>
<dbReference type="EMBL" id="AF411974">
    <property type="protein sequence ID" value="AAL78386.1"/>
    <property type="molecule type" value="mRNA"/>
</dbReference>
<dbReference type="RefSeq" id="NP_001009754.1">
    <property type="nucleotide sequence ID" value="NM_001009754.1"/>
</dbReference>
<dbReference type="RefSeq" id="XP_011954627.1">
    <property type="nucleotide sequence ID" value="XM_012099237.5"/>
</dbReference>
<dbReference type="RefSeq" id="XP_011954628.1">
    <property type="nucleotide sequence ID" value="XM_012099238.4"/>
</dbReference>
<dbReference type="RefSeq" id="XP_011954629.1">
    <property type="nucleotide sequence ID" value="XM_012099239.2"/>
</dbReference>
<dbReference type="RefSeq" id="XP_042091662.1">
    <property type="nucleotide sequence ID" value="XM_042235728.2"/>
</dbReference>
<dbReference type="SMR" id="Q8SQG7"/>
<dbReference type="STRING" id="9940.ENSOARP00000010309"/>
<dbReference type="CAZy" id="GH56">
    <property type="family name" value="Glycoside Hydrolase Family 56"/>
</dbReference>
<dbReference type="GlyCosmos" id="Q8SQG7">
    <property type="glycosylation" value="4 sites, No reported glycans"/>
</dbReference>
<dbReference type="PaxDb" id="9940-ENSOARP00000010309"/>
<dbReference type="GeneID" id="443154"/>
<dbReference type="KEGG" id="oas:443154"/>
<dbReference type="CTD" id="8692"/>
<dbReference type="eggNOG" id="ENOG502QUYI">
    <property type="taxonomic scope" value="Eukaryota"/>
</dbReference>
<dbReference type="HOGENOM" id="CLU_036366_0_0_1"/>
<dbReference type="OMA" id="TKNRESC"/>
<dbReference type="OrthoDB" id="5796153at2759"/>
<dbReference type="Proteomes" id="UP000002356">
    <property type="component" value="Chromosome 19"/>
</dbReference>
<dbReference type="Bgee" id="ENSOARG00000009614">
    <property type="expression patterns" value="Expressed in prescapular lymph node and 52 other cell types or tissues"/>
</dbReference>
<dbReference type="GO" id="GO:0016324">
    <property type="term" value="C:apical plasma membrane"/>
    <property type="evidence" value="ECO:0000250"/>
    <property type="project" value="UniProtKB"/>
</dbReference>
<dbReference type="GO" id="GO:0031410">
    <property type="term" value="C:cytoplasmic vesicle"/>
    <property type="evidence" value="ECO:0000250"/>
    <property type="project" value="UniProtKB"/>
</dbReference>
<dbReference type="GO" id="GO:0005829">
    <property type="term" value="C:cytosol"/>
    <property type="evidence" value="ECO:0000250"/>
    <property type="project" value="UniProtKB"/>
</dbReference>
<dbReference type="GO" id="GO:0030139">
    <property type="term" value="C:endocytic vesicle"/>
    <property type="evidence" value="ECO:0000250"/>
    <property type="project" value="UniProtKB"/>
</dbReference>
<dbReference type="GO" id="GO:0009897">
    <property type="term" value="C:external side of plasma membrane"/>
    <property type="evidence" value="ECO:0007669"/>
    <property type="project" value="Ensembl"/>
</dbReference>
<dbReference type="GO" id="GO:0005764">
    <property type="term" value="C:lysosome"/>
    <property type="evidence" value="ECO:0000250"/>
    <property type="project" value="UniProtKB"/>
</dbReference>
<dbReference type="GO" id="GO:0045121">
    <property type="term" value="C:membrane raft"/>
    <property type="evidence" value="ECO:0000250"/>
    <property type="project" value="UniProtKB"/>
</dbReference>
<dbReference type="GO" id="GO:0005902">
    <property type="term" value="C:microvillus"/>
    <property type="evidence" value="ECO:0000250"/>
    <property type="project" value="UniProtKB"/>
</dbReference>
<dbReference type="GO" id="GO:0048471">
    <property type="term" value="C:perinuclear region of cytoplasm"/>
    <property type="evidence" value="ECO:0000250"/>
    <property type="project" value="UniProtKB"/>
</dbReference>
<dbReference type="GO" id="GO:0005886">
    <property type="term" value="C:plasma membrane"/>
    <property type="evidence" value="ECO:0000250"/>
    <property type="project" value="UniProtKB"/>
</dbReference>
<dbReference type="GO" id="GO:0090575">
    <property type="term" value="C:RNA polymerase II transcription regulator complex"/>
    <property type="evidence" value="ECO:0007669"/>
    <property type="project" value="Ensembl"/>
</dbReference>
<dbReference type="GO" id="GO:0005540">
    <property type="term" value="F:hyaluronic acid binding"/>
    <property type="evidence" value="ECO:0000250"/>
    <property type="project" value="UniProtKB"/>
</dbReference>
<dbReference type="GO" id="GO:0033906">
    <property type="term" value="F:hyaluronoglucuronidase activity"/>
    <property type="evidence" value="ECO:0000250"/>
    <property type="project" value="UniProtKB"/>
</dbReference>
<dbReference type="GO" id="GO:0004415">
    <property type="term" value="F:hyalurononglucosaminidase activity"/>
    <property type="evidence" value="ECO:0000250"/>
    <property type="project" value="UniProtKB"/>
</dbReference>
<dbReference type="GO" id="GO:0030294">
    <property type="term" value="F:receptor signaling protein tyrosine kinase inhibitor activity"/>
    <property type="evidence" value="ECO:0000250"/>
    <property type="project" value="UniProtKB"/>
</dbReference>
<dbReference type="GO" id="GO:0030971">
    <property type="term" value="F:receptor tyrosine kinase binding"/>
    <property type="evidence" value="ECO:0007669"/>
    <property type="project" value="Ensembl"/>
</dbReference>
<dbReference type="GO" id="GO:0003713">
    <property type="term" value="F:transcription coactivator activity"/>
    <property type="evidence" value="ECO:0007669"/>
    <property type="project" value="Ensembl"/>
</dbReference>
<dbReference type="GO" id="GO:0050431">
    <property type="term" value="F:transforming growth factor beta binding"/>
    <property type="evidence" value="ECO:0007669"/>
    <property type="project" value="Ensembl"/>
</dbReference>
<dbReference type="GO" id="GO:0001618">
    <property type="term" value="F:virus receptor activity"/>
    <property type="evidence" value="ECO:0000250"/>
    <property type="project" value="UniProtKB"/>
</dbReference>
<dbReference type="GO" id="GO:0005975">
    <property type="term" value="P:carbohydrate metabolic process"/>
    <property type="evidence" value="ECO:0007669"/>
    <property type="project" value="InterPro"/>
</dbReference>
<dbReference type="GO" id="GO:0051216">
    <property type="term" value="P:cartilage development"/>
    <property type="evidence" value="ECO:0000250"/>
    <property type="project" value="UniProtKB"/>
</dbReference>
<dbReference type="GO" id="GO:0044344">
    <property type="term" value="P:cellular response to fibroblast growth factor stimulus"/>
    <property type="evidence" value="ECO:0000250"/>
    <property type="project" value="UniProtKB"/>
</dbReference>
<dbReference type="GO" id="GO:0071347">
    <property type="term" value="P:cellular response to interleukin-1"/>
    <property type="evidence" value="ECO:0000250"/>
    <property type="project" value="UniProtKB"/>
</dbReference>
<dbReference type="GO" id="GO:0071560">
    <property type="term" value="P:cellular response to transforming growth factor beta stimulus"/>
    <property type="evidence" value="ECO:0000250"/>
    <property type="project" value="UniProtKB"/>
</dbReference>
<dbReference type="GO" id="GO:0071356">
    <property type="term" value="P:cellular response to tumor necrosis factor"/>
    <property type="evidence" value="ECO:0007669"/>
    <property type="project" value="Ensembl"/>
</dbReference>
<dbReference type="GO" id="GO:0071493">
    <property type="term" value="P:cellular response to UV-B"/>
    <property type="evidence" value="ECO:0000250"/>
    <property type="project" value="UniProtKB"/>
</dbReference>
<dbReference type="GO" id="GO:0051607">
    <property type="term" value="P:defense response to virus"/>
    <property type="evidence" value="ECO:0007669"/>
    <property type="project" value="Ensembl"/>
</dbReference>
<dbReference type="GO" id="GO:0006027">
    <property type="term" value="P:glycosaminoglycan catabolic process"/>
    <property type="evidence" value="ECO:0000250"/>
    <property type="project" value="UniProtKB"/>
</dbReference>
<dbReference type="GO" id="GO:0002244">
    <property type="term" value="P:hematopoietic progenitor cell differentiation"/>
    <property type="evidence" value="ECO:0007669"/>
    <property type="project" value="Ensembl"/>
</dbReference>
<dbReference type="GO" id="GO:0030214">
    <property type="term" value="P:hyaluronan catabolic process"/>
    <property type="evidence" value="ECO:0000250"/>
    <property type="project" value="UniProtKB"/>
</dbReference>
<dbReference type="GO" id="GO:0042117">
    <property type="term" value="P:monocyte activation"/>
    <property type="evidence" value="ECO:0000250"/>
    <property type="project" value="UniProtKB"/>
</dbReference>
<dbReference type="GO" id="GO:0060586">
    <property type="term" value="P:multicellular organismal-level iron ion homeostasis"/>
    <property type="evidence" value="ECO:0007669"/>
    <property type="project" value="Ensembl"/>
</dbReference>
<dbReference type="GO" id="GO:0030308">
    <property type="term" value="P:negative regulation of cell growth"/>
    <property type="evidence" value="ECO:0000250"/>
    <property type="project" value="UniProtKB"/>
</dbReference>
<dbReference type="GO" id="GO:0010764">
    <property type="term" value="P:negative regulation of fibroblast migration"/>
    <property type="evidence" value="ECO:0000250"/>
    <property type="project" value="UniProtKB"/>
</dbReference>
<dbReference type="GO" id="GO:0051898">
    <property type="term" value="P:negative regulation of phosphatidylinositol 3-kinase/protein kinase B signal transduction"/>
    <property type="evidence" value="ECO:0000250"/>
    <property type="project" value="UniProtKB"/>
</dbReference>
<dbReference type="GO" id="GO:2001238">
    <property type="term" value="P:positive regulation of extrinsic apoptotic signaling pathway"/>
    <property type="evidence" value="ECO:0007669"/>
    <property type="project" value="Ensembl"/>
</dbReference>
<dbReference type="GO" id="GO:0050729">
    <property type="term" value="P:positive regulation of inflammatory response"/>
    <property type="evidence" value="ECO:0000250"/>
    <property type="project" value="UniProtKB"/>
</dbReference>
<dbReference type="GO" id="GO:0032755">
    <property type="term" value="P:positive regulation of interleukin-6 production"/>
    <property type="evidence" value="ECO:0000250"/>
    <property type="project" value="UniProtKB"/>
</dbReference>
<dbReference type="GO" id="GO:0032757">
    <property type="term" value="P:positive regulation of interleukin-8 production"/>
    <property type="evidence" value="ECO:0000250"/>
    <property type="project" value="UniProtKB"/>
</dbReference>
<dbReference type="GO" id="GO:0042307">
    <property type="term" value="P:positive regulation of protein import into nucleus"/>
    <property type="evidence" value="ECO:0007669"/>
    <property type="project" value="Ensembl"/>
</dbReference>
<dbReference type="GO" id="GO:0045944">
    <property type="term" value="P:positive regulation of transcription by RNA polymerase II"/>
    <property type="evidence" value="ECO:0007669"/>
    <property type="project" value="Ensembl"/>
</dbReference>
<dbReference type="GO" id="GO:0035810">
    <property type="term" value="P:positive regulation of urine volume"/>
    <property type="evidence" value="ECO:0000250"/>
    <property type="project" value="UniProtKB"/>
</dbReference>
<dbReference type="GO" id="GO:0070295">
    <property type="term" value="P:renal water absorption"/>
    <property type="evidence" value="ECO:0000250"/>
    <property type="project" value="UniProtKB"/>
</dbReference>
<dbReference type="GO" id="GO:0046677">
    <property type="term" value="P:response to antibiotic"/>
    <property type="evidence" value="ECO:0007669"/>
    <property type="project" value="Ensembl"/>
</dbReference>
<dbReference type="GO" id="GO:0000302">
    <property type="term" value="P:response to reactive oxygen species"/>
    <property type="evidence" value="ECO:0000250"/>
    <property type="project" value="UniProtKB"/>
</dbReference>
<dbReference type="GO" id="GO:0009615">
    <property type="term" value="P:response to virus"/>
    <property type="evidence" value="ECO:0000250"/>
    <property type="project" value="UniProtKB"/>
</dbReference>
<dbReference type="GO" id="GO:0048705">
    <property type="term" value="P:skeletal system morphogenesis"/>
    <property type="evidence" value="ECO:0007669"/>
    <property type="project" value="Ensembl"/>
</dbReference>
<dbReference type="GO" id="GO:0046718">
    <property type="term" value="P:symbiont entry into host cell"/>
    <property type="evidence" value="ECO:0000250"/>
    <property type="project" value="UniProtKB"/>
</dbReference>
<dbReference type="FunFam" id="3.20.20.70:FF:000065">
    <property type="entry name" value="Hyaluronidase"/>
    <property type="match status" value="1"/>
</dbReference>
<dbReference type="Gene3D" id="3.20.20.70">
    <property type="entry name" value="Aldolase class I"/>
    <property type="match status" value="1"/>
</dbReference>
<dbReference type="InterPro" id="IPR013785">
    <property type="entry name" value="Aldolase_TIM"/>
</dbReference>
<dbReference type="InterPro" id="IPR017853">
    <property type="entry name" value="Glycoside_hydrolase_SF"/>
</dbReference>
<dbReference type="InterPro" id="IPR018155">
    <property type="entry name" value="Hyaluronidase"/>
</dbReference>
<dbReference type="PANTHER" id="PTHR11769">
    <property type="entry name" value="HYALURONIDASE"/>
    <property type="match status" value="1"/>
</dbReference>
<dbReference type="PANTHER" id="PTHR11769:SF6">
    <property type="entry name" value="HYALURONIDASE-2"/>
    <property type="match status" value="1"/>
</dbReference>
<dbReference type="Pfam" id="PF01630">
    <property type="entry name" value="Glyco_hydro_56"/>
    <property type="match status" value="1"/>
</dbReference>
<dbReference type="PIRSF" id="PIRSF038193">
    <property type="entry name" value="Hyaluronidase"/>
    <property type="match status" value="1"/>
</dbReference>
<dbReference type="PRINTS" id="PR00846">
    <property type="entry name" value="GLHYDRLASE56"/>
</dbReference>
<dbReference type="SUPFAM" id="SSF51445">
    <property type="entry name" value="(Trans)glycosidases"/>
    <property type="match status" value="1"/>
</dbReference>
<dbReference type="PROSITE" id="PS00022">
    <property type="entry name" value="EGF_1"/>
    <property type="match status" value="1"/>
</dbReference>
<dbReference type="PROSITE" id="PS01186">
    <property type="entry name" value="EGF_2"/>
    <property type="match status" value="1"/>
</dbReference>
<protein>
    <recommendedName>
        <fullName>Hyaluronidase-2</fullName>
        <shortName>Hyal-2</shortName>
        <ecNumber>3.2.1.35</ecNumber>
    </recommendedName>
    <alternativeName>
        <fullName>Hyaluronoglucosaminidase-2</fullName>
    </alternativeName>
</protein>
<accession>Q8SQG7</accession>